<proteinExistence type="inferred from homology"/>
<name>ASQB_EMENI</name>
<sequence>MSSQSFRQIIGLAPSTATITDSTLIIVDAQNEYAQGLLRVQEVDQSRKVIADLLSRYRYMAHVCVSTTARTGAELGYDVLVVRDGVSDRAIPGVEANVLVDVALKEVTDAFGTVIASGEIKGVIYPVIFLYLYIQDLI</sequence>
<reference key="1">
    <citation type="journal article" date="2005" name="Nature">
        <title>Sequencing of Aspergillus nidulans and comparative analysis with A. fumigatus and A. oryzae.</title>
        <authorList>
            <person name="Galagan J.E."/>
            <person name="Calvo S.E."/>
            <person name="Cuomo C."/>
            <person name="Ma L.-J."/>
            <person name="Wortman J.R."/>
            <person name="Batzoglou S."/>
            <person name="Lee S.-I."/>
            <person name="Bastuerkmen M."/>
            <person name="Spevak C.C."/>
            <person name="Clutterbuck J."/>
            <person name="Kapitonov V."/>
            <person name="Jurka J."/>
            <person name="Scazzocchio C."/>
            <person name="Farman M.L."/>
            <person name="Butler J."/>
            <person name="Purcell S."/>
            <person name="Harris S."/>
            <person name="Braus G.H."/>
            <person name="Draht O."/>
            <person name="Busch S."/>
            <person name="D'Enfert C."/>
            <person name="Bouchier C."/>
            <person name="Goldman G.H."/>
            <person name="Bell-Pedersen D."/>
            <person name="Griffiths-Jones S."/>
            <person name="Doonan J.H."/>
            <person name="Yu J."/>
            <person name="Vienken K."/>
            <person name="Pain A."/>
            <person name="Freitag M."/>
            <person name="Selker E.U."/>
            <person name="Archer D.B."/>
            <person name="Penalva M.A."/>
            <person name="Oakley B.R."/>
            <person name="Momany M."/>
            <person name="Tanaka T."/>
            <person name="Kumagai T."/>
            <person name="Asai K."/>
            <person name="Machida M."/>
            <person name="Nierman W.C."/>
            <person name="Denning D.W."/>
            <person name="Caddick M.X."/>
            <person name="Hynes M."/>
            <person name="Paoletti M."/>
            <person name="Fischer R."/>
            <person name="Miller B.L."/>
            <person name="Dyer P.S."/>
            <person name="Sachs M.S."/>
            <person name="Osmani S.A."/>
            <person name="Birren B.W."/>
        </authorList>
    </citation>
    <scope>NUCLEOTIDE SEQUENCE [LARGE SCALE GENOMIC DNA]</scope>
    <source>
        <strain>FGSC A4 / ATCC 38163 / CBS 112.46 / NRRL 194 / M139</strain>
    </source>
</reference>
<reference key="2">
    <citation type="journal article" date="2009" name="Fungal Genet. Biol.">
        <title>The 2008 update of the Aspergillus nidulans genome annotation: a community effort.</title>
        <authorList>
            <person name="Wortman J.R."/>
            <person name="Gilsenan J.M."/>
            <person name="Joardar V."/>
            <person name="Deegan J."/>
            <person name="Clutterbuck J."/>
            <person name="Andersen M.R."/>
            <person name="Archer D."/>
            <person name="Bencina M."/>
            <person name="Braus G."/>
            <person name="Coutinho P."/>
            <person name="von Dohren H."/>
            <person name="Doonan J."/>
            <person name="Driessen A.J."/>
            <person name="Durek P."/>
            <person name="Espeso E."/>
            <person name="Fekete E."/>
            <person name="Flipphi M."/>
            <person name="Estrada C.G."/>
            <person name="Geysens S."/>
            <person name="Goldman G."/>
            <person name="de Groot P.W."/>
            <person name="Hansen K."/>
            <person name="Harris S.D."/>
            <person name="Heinekamp T."/>
            <person name="Helmstaedt K."/>
            <person name="Henrissat B."/>
            <person name="Hofmann G."/>
            <person name="Homan T."/>
            <person name="Horio T."/>
            <person name="Horiuchi H."/>
            <person name="James S."/>
            <person name="Jones M."/>
            <person name="Karaffa L."/>
            <person name="Karanyi Z."/>
            <person name="Kato M."/>
            <person name="Keller N."/>
            <person name="Kelly D.E."/>
            <person name="Kiel J.A."/>
            <person name="Kim J.M."/>
            <person name="van der Klei I.J."/>
            <person name="Klis F.M."/>
            <person name="Kovalchuk A."/>
            <person name="Krasevec N."/>
            <person name="Kubicek C.P."/>
            <person name="Liu B."/>
            <person name="Maccabe A."/>
            <person name="Meyer V."/>
            <person name="Mirabito P."/>
            <person name="Miskei M."/>
            <person name="Mos M."/>
            <person name="Mullins J."/>
            <person name="Nelson D.R."/>
            <person name="Nielsen J."/>
            <person name="Oakley B.R."/>
            <person name="Osmani S.A."/>
            <person name="Pakula T."/>
            <person name="Paszewski A."/>
            <person name="Paulsen I."/>
            <person name="Pilsyk S."/>
            <person name="Pocsi I."/>
            <person name="Punt P.J."/>
            <person name="Ram A.F."/>
            <person name="Ren Q."/>
            <person name="Robellet X."/>
            <person name="Robson G."/>
            <person name="Seiboth B."/>
            <person name="van Solingen P."/>
            <person name="Specht T."/>
            <person name="Sun J."/>
            <person name="Taheri-Talesh N."/>
            <person name="Takeshita N."/>
            <person name="Ussery D."/>
            <person name="vanKuyk P.A."/>
            <person name="Visser H."/>
            <person name="van de Vondervoort P.J."/>
            <person name="de Vries R.P."/>
            <person name="Walton J."/>
            <person name="Xiang X."/>
            <person name="Xiong Y."/>
            <person name="Zeng A.P."/>
            <person name="Brandt B.W."/>
            <person name="Cornell M.J."/>
            <person name="van den Hondel C.A."/>
            <person name="Visser J."/>
            <person name="Oliver S.G."/>
            <person name="Turner G."/>
        </authorList>
    </citation>
    <scope>GENOME REANNOTATION</scope>
    <source>
        <strain>FGSC A4 / ATCC 38163 / CBS 112.46 / NRRL 194 / M139</strain>
    </source>
</reference>
<reference key="3">
    <citation type="journal article" date="2014" name="Angew. Chem. Int. Ed.">
        <title>Non-heme dioxygenase catalyzes atypical oxidations of 6,7-bicyclic systems to form the 6,6-quinolone core of viridicatin-type fungal alkaloids.</title>
        <authorList>
            <person name="Ishikawa N."/>
            <person name="Tanaka H."/>
            <person name="Koyama F."/>
            <person name="Noguchi H."/>
            <person name="Wang C.C."/>
            <person name="Hotta K."/>
            <person name="Watanabe K."/>
        </authorList>
    </citation>
    <scope>FUNCTION</scope>
    <scope>PATHWAY</scope>
</reference>
<feature type="chain" id="PRO_0000437631" description="Isochorismatase-like protein asqB">
    <location>
        <begin position="1"/>
        <end position="138"/>
    </location>
</feature>
<accession>Q5AR45</accession>
<accession>C8VJP4</accession>
<evidence type="ECO:0000250" key="1">
    <source>
        <dbReference type="UniProtKB" id="A0A1B2CTB8"/>
    </source>
</evidence>
<evidence type="ECO:0000269" key="2">
    <source>
    </source>
</evidence>
<evidence type="ECO:0000303" key="3">
    <source>
    </source>
</evidence>
<evidence type="ECO:0000305" key="4"/>
<evidence type="ECO:0000305" key="5">
    <source>
    </source>
</evidence>
<comment type="function">
    <text evidence="1 2 4">Isochorismatase-like protein; part of the gene cluster that mediates the biosynthesis of the aspoquinolone mycotoxins (PubMed:25251934). Within the pathway, asqB converts [(1'E)-5'-(3',3'-dimethyloxiran-2'-yl)-3'-hydroxy-3'-methylpent-1'-en-1'-yl]-quinolinone B into yaequinolone C (By similarity). The first step of the pathway is catalyzed by the nonribosomal peptide synthetase asqK that condenses anthranilic acid and O-methyl-L-tyrosine to produce 4'-methoxycyclopeptin. 4'-methoxycyclopeptin is then converted to 4'-methoxydehydrocyclopeptin by the ketoglutarate-dependent dioxygenase asqJ. AsqJ also converts its first product 4'-methoxydehydrocyclopeptin to 4'-methoxycyclopenin. The following conversion of 4'-methoxycyclopenin into 4'-methoxyviridicatin is catalyzed by the cyclopenase asqI. 4'-methoxyviridicatin is the precursor of quinolone natural products, and is further converted to quinolinone B. The prenyltransferase asqH1 then catalyzes the canonical Friedel-Crafts alkylation of quinolinone B with dimethylallyl cation to yield dimethylallyl quinolone, which is subjected to FAD-dependent dehydrogenation by the FAD-linked oxidoreductase asqF to yield conjugated aryl diene. The delta(3') double bond then serves as the site of the second alkylation with DMAPP catalyzed by the prenyltransferase asqH2 to yield a carbenium ion intermediate, which can be attacked by H(2)O to yield a styrenyl quinolone containing a C3'-hydroxyprenyl chain. The FAD-dependent monooxygenase asqG performs epoxidation of the terminal C7'-C8' olefin. Finally, after dehydratation of the epoxide at C3 by asqC, the quinolone epoxide rearrangement protein asqO catalyzes an enzymatic 3-exo-tet cyclization to yield the cyclopropyl-THF ring system in aspoquinolone (Probable).</text>
</comment>
<comment type="catalytic activity">
    <reaction evidence="1">
        <text>[(1'E)-5'-(3',3'-dimethyloxiran-2'-yl)-3'-hydroxy-3'-methylpent-1'-en-1'-yl]-quinolinone B = yaequinolone C</text>
        <dbReference type="Rhea" id="RHEA:74495"/>
        <dbReference type="ChEBI" id="CHEBI:193079"/>
        <dbReference type="ChEBI" id="CHEBI:193557"/>
    </reaction>
    <physiologicalReaction direction="left-to-right" evidence="1">
        <dbReference type="Rhea" id="RHEA:74496"/>
    </physiologicalReaction>
</comment>
<comment type="pathway">
    <text evidence="5">Secondary metabolite biosynthesis.</text>
</comment>
<comment type="pathway">
    <text evidence="5">Alkaloid biosynthesis.</text>
</comment>
<comment type="pathway">
    <text evidence="5">Mycotoxin biosynthesis.</text>
</comment>
<comment type="similarity">
    <text evidence="4">Belongs to the isochorismatase family.</text>
</comment>
<keyword id="KW-0378">Hydrolase</keyword>
<keyword id="KW-1185">Reference proteome</keyword>
<gene>
    <name evidence="3" type="primary">asqB</name>
    <name type="ORF">AN9235</name>
</gene>
<organism>
    <name type="scientific">Emericella nidulans (strain FGSC A4 / ATCC 38163 / CBS 112.46 / NRRL 194 / M139)</name>
    <name type="common">Aspergillus nidulans</name>
    <dbReference type="NCBI Taxonomy" id="227321"/>
    <lineage>
        <taxon>Eukaryota</taxon>
        <taxon>Fungi</taxon>
        <taxon>Dikarya</taxon>
        <taxon>Ascomycota</taxon>
        <taxon>Pezizomycotina</taxon>
        <taxon>Eurotiomycetes</taxon>
        <taxon>Eurotiomycetidae</taxon>
        <taxon>Eurotiales</taxon>
        <taxon>Aspergillaceae</taxon>
        <taxon>Aspergillus</taxon>
        <taxon>Aspergillus subgen. Nidulantes</taxon>
    </lineage>
</organism>
<dbReference type="EC" id="3.-.-.-" evidence="1"/>
<dbReference type="EMBL" id="BN001306">
    <property type="protein sequence ID" value="CBF82263.1"/>
    <property type="molecule type" value="Genomic_DNA"/>
</dbReference>
<dbReference type="EMBL" id="AACD01000170">
    <property type="protein sequence ID" value="EAA61526.1"/>
    <property type="molecule type" value="Genomic_DNA"/>
</dbReference>
<dbReference type="RefSeq" id="XP_682504.1">
    <property type="nucleotide sequence ID" value="XM_677412.1"/>
</dbReference>
<dbReference type="SMR" id="Q5AR45"/>
<dbReference type="STRING" id="227321.Q5AR45"/>
<dbReference type="EnsemblFungi" id="CBF82263">
    <property type="protein sequence ID" value="CBF82263"/>
    <property type="gene ID" value="ANIA_09235"/>
</dbReference>
<dbReference type="KEGG" id="ani:ANIA_09235"/>
<dbReference type="eggNOG" id="ENOG502RXWW">
    <property type="taxonomic scope" value="Eukaryota"/>
</dbReference>
<dbReference type="HOGENOM" id="CLU_068979_5_1_1"/>
<dbReference type="InParanoid" id="Q5AR45"/>
<dbReference type="OrthoDB" id="245563at2759"/>
<dbReference type="Proteomes" id="UP000000560">
    <property type="component" value="Chromosome VI"/>
</dbReference>
<dbReference type="GO" id="GO:0016787">
    <property type="term" value="F:hydrolase activity"/>
    <property type="evidence" value="ECO:0007669"/>
    <property type="project" value="UniProtKB-KW"/>
</dbReference>
<dbReference type="Gene3D" id="3.40.50.850">
    <property type="entry name" value="Isochorismatase-like"/>
    <property type="match status" value="1"/>
</dbReference>
<dbReference type="InterPro" id="IPR000868">
    <property type="entry name" value="Isochorismatase-like_dom"/>
</dbReference>
<dbReference type="InterPro" id="IPR036380">
    <property type="entry name" value="Isochorismatase-like_sf"/>
</dbReference>
<dbReference type="Pfam" id="PF00857">
    <property type="entry name" value="Isochorismatase"/>
    <property type="match status" value="1"/>
</dbReference>
<dbReference type="SUPFAM" id="SSF52499">
    <property type="entry name" value="Isochorismatase-like hydrolases"/>
    <property type="match status" value="1"/>
</dbReference>
<protein>
    <recommendedName>
        <fullName evidence="3">Isochorismatase-like protein asqB</fullName>
        <ecNumber evidence="1">3.-.-.-</ecNumber>
    </recommendedName>
    <alternativeName>
        <fullName evidence="4">4'-methoxyviridicatin/aspoquinolone biosynthesis cluster protein asqB</fullName>
    </alternativeName>
    <alternativeName>
        <fullName evidence="3">Aspoquinolone biosynthesis protein B</fullName>
    </alternativeName>
</protein>